<organism>
    <name type="scientific">Mycobacterium tuberculosis (strain ATCC 25177 / H37Ra)</name>
    <dbReference type="NCBI Taxonomy" id="419947"/>
    <lineage>
        <taxon>Bacteria</taxon>
        <taxon>Bacillati</taxon>
        <taxon>Actinomycetota</taxon>
        <taxon>Actinomycetes</taxon>
        <taxon>Mycobacteriales</taxon>
        <taxon>Mycobacteriaceae</taxon>
        <taxon>Mycobacterium</taxon>
        <taxon>Mycobacterium tuberculosis complex</taxon>
    </lineage>
</organism>
<name>Y1908_MYCTA</name>
<reference key="1">
    <citation type="journal article" date="2008" name="PLoS ONE">
        <title>Genetic basis of virulence attenuation revealed by comparative genomic analysis of Mycobacterium tuberculosis strain H37Ra versus H37Rv.</title>
        <authorList>
            <person name="Zheng H."/>
            <person name="Lu L."/>
            <person name="Wang B."/>
            <person name="Pu S."/>
            <person name="Zhang X."/>
            <person name="Zhu G."/>
            <person name="Shi W."/>
            <person name="Zhang L."/>
            <person name="Wang H."/>
            <person name="Wang S."/>
            <person name="Zhao G."/>
            <person name="Zhang Y."/>
        </authorList>
    </citation>
    <scope>NUCLEOTIDE SEQUENCE [LARGE SCALE GENOMIC DNA]</scope>
    <source>
        <strain>ATCC 25177 / H37Ra</strain>
    </source>
</reference>
<dbReference type="EC" id="2.1.1.-"/>
<dbReference type="EMBL" id="CP000611">
    <property type="protein sequence ID" value="ABQ73665.1"/>
    <property type="molecule type" value="Genomic_DNA"/>
</dbReference>
<dbReference type="RefSeq" id="WP_003409526.1">
    <property type="nucleotide sequence ID" value="NZ_CP016972.1"/>
</dbReference>
<dbReference type="SMR" id="A5U3R5"/>
<dbReference type="KEGG" id="mra:MRA_1908"/>
<dbReference type="eggNOG" id="COG3315">
    <property type="taxonomic scope" value="Bacteria"/>
</dbReference>
<dbReference type="HOGENOM" id="CLU_056160_2_1_11"/>
<dbReference type="Proteomes" id="UP000001988">
    <property type="component" value="Chromosome"/>
</dbReference>
<dbReference type="GO" id="GO:0008168">
    <property type="term" value="F:methyltransferase activity"/>
    <property type="evidence" value="ECO:0007669"/>
    <property type="project" value="UniProtKB-KW"/>
</dbReference>
<dbReference type="GO" id="GO:0032259">
    <property type="term" value="P:methylation"/>
    <property type="evidence" value="ECO:0007669"/>
    <property type="project" value="UniProtKB-KW"/>
</dbReference>
<dbReference type="Gene3D" id="3.40.50.150">
    <property type="entry name" value="Vaccinia Virus protein VP39"/>
    <property type="match status" value="1"/>
</dbReference>
<dbReference type="InterPro" id="IPR007213">
    <property type="entry name" value="Ppm1/Ppm2/Tcmp"/>
</dbReference>
<dbReference type="InterPro" id="IPR029063">
    <property type="entry name" value="SAM-dependent_MTases_sf"/>
</dbReference>
<dbReference type="InterPro" id="IPR011610">
    <property type="entry name" value="SAM_mthyl_Trfase_ML2640-like"/>
</dbReference>
<dbReference type="NCBIfam" id="TIGR00027">
    <property type="entry name" value="mthyl_TIGR00027"/>
    <property type="match status" value="1"/>
</dbReference>
<dbReference type="PANTHER" id="PTHR43619">
    <property type="entry name" value="S-ADENOSYL-L-METHIONINE-DEPENDENT METHYLTRANSFERASE YKTD-RELATED"/>
    <property type="match status" value="1"/>
</dbReference>
<dbReference type="PANTHER" id="PTHR43619:SF2">
    <property type="entry name" value="S-ADENOSYL-L-METHIONINE-DEPENDENT METHYLTRANSFERASES SUPERFAMILY PROTEIN"/>
    <property type="match status" value="1"/>
</dbReference>
<dbReference type="Pfam" id="PF04072">
    <property type="entry name" value="LCM"/>
    <property type="match status" value="1"/>
</dbReference>
<dbReference type="SUPFAM" id="SSF53335">
    <property type="entry name" value="S-adenosyl-L-methionine-dependent methyltransferases"/>
    <property type="match status" value="1"/>
</dbReference>
<sequence>MTTPEYGSLRSDDDHWDIVSNVGYTALLVAGWRALHTTGPKPLVQDEYAKHFITASADPYLEGLLANPRTSEDGTAFPRLYGVQTRFFDDFFNCADEAGIRQAVIVAAGLDCRAYRLDWQPGTTVFEIDVPKVLEFKARVLSERGAVPKAHRVAVPADLRTDWPTPLTAAGFDPQRPSAWSVEGLLPYLTGDAQYALFARIDELCAPGSRVALGALGSRLDHEQLAALETAHPGVNMSGDVNFSALTYDDKTDPVEWLVEHGWAVDPVRSTLELQVGYGLTPPDVDVKIDSFMRSQYITAVRA</sequence>
<proteinExistence type="inferred from homology"/>
<accession>A5U3R5</accession>
<gene>
    <name type="ordered locus">MRA_1908</name>
</gene>
<evidence type="ECO:0000250" key="1"/>
<evidence type="ECO:0000305" key="2"/>
<feature type="chain" id="PRO_0000361225" description="Putative S-adenosyl-L-methionine-dependent methyltransferase MRA_1908">
    <location>
        <begin position="1"/>
        <end position="303"/>
    </location>
</feature>
<feature type="binding site" evidence="1">
    <location>
        <position position="129"/>
    </location>
    <ligand>
        <name>S-adenosyl-L-methionine</name>
        <dbReference type="ChEBI" id="CHEBI:59789"/>
    </ligand>
</feature>
<feature type="binding site" evidence="1">
    <location>
        <begin position="158"/>
        <end position="159"/>
    </location>
    <ligand>
        <name>S-adenosyl-L-methionine</name>
        <dbReference type="ChEBI" id="CHEBI:59789"/>
    </ligand>
</feature>
<protein>
    <recommendedName>
        <fullName>Putative S-adenosyl-L-methionine-dependent methyltransferase MRA_1908</fullName>
        <ecNumber>2.1.1.-</ecNumber>
    </recommendedName>
</protein>
<keyword id="KW-0489">Methyltransferase</keyword>
<keyword id="KW-1185">Reference proteome</keyword>
<keyword id="KW-0949">S-adenosyl-L-methionine</keyword>
<keyword id="KW-0808">Transferase</keyword>
<comment type="function">
    <text evidence="1">Exhibits S-adenosyl-L-methionine-dependent methyltransferase activity.</text>
</comment>
<comment type="similarity">
    <text evidence="2">Belongs to the UPF0677 family.</text>
</comment>